<comment type="function">
    <text evidence="1">This is one of the proteins that binds to the 5S RNA in the ribosome where it forms part of the central protuberance.</text>
</comment>
<comment type="subunit">
    <text evidence="1">Part of the 50S ribosomal subunit; part of the 5S rRNA/L5/L18/L25 subcomplex. Contacts the 5S rRNA. Binds to the 5S rRNA independently of L5 and L18.</text>
</comment>
<comment type="similarity">
    <text evidence="1">Belongs to the bacterial ribosomal protein bL25 family. CTC subfamily.</text>
</comment>
<feature type="chain" id="PRO_0000181541" description="Large ribosomal subunit protein bL25">
    <location>
        <begin position="1"/>
        <end position="200"/>
    </location>
</feature>
<accession>Q8NRV2</accession>
<accession>Q6M6L1</accession>
<dbReference type="EMBL" id="BA000036">
    <property type="protein sequence ID" value="BAB98332.1"/>
    <property type="molecule type" value="Genomic_DNA"/>
</dbReference>
<dbReference type="EMBL" id="BX927150">
    <property type="protein sequence ID" value="CAF19646.1"/>
    <property type="molecule type" value="Genomic_DNA"/>
</dbReference>
<dbReference type="RefSeq" id="NP_600167.1">
    <property type="nucleotide sequence ID" value="NC_003450.3"/>
</dbReference>
<dbReference type="RefSeq" id="WP_011013990.1">
    <property type="nucleotide sequence ID" value="NC_006958.1"/>
</dbReference>
<dbReference type="SMR" id="Q8NRV2"/>
<dbReference type="STRING" id="196627.cg1072"/>
<dbReference type="DNASU" id="3343373"/>
<dbReference type="KEGG" id="cgb:cg1072"/>
<dbReference type="KEGG" id="cgl:Cgl0939"/>
<dbReference type="PATRIC" id="fig|196627.13.peg.926"/>
<dbReference type="eggNOG" id="COG1825">
    <property type="taxonomic scope" value="Bacteria"/>
</dbReference>
<dbReference type="HOGENOM" id="CLU_075939_1_0_11"/>
<dbReference type="OrthoDB" id="5242980at2"/>
<dbReference type="BioCyc" id="CORYNE:G18NG-10509-MONOMER"/>
<dbReference type="Proteomes" id="UP000000582">
    <property type="component" value="Chromosome"/>
</dbReference>
<dbReference type="Proteomes" id="UP000001009">
    <property type="component" value="Chromosome"/>
</dbReference>
<dbReference type="GO" id="GO:0022625">
    <property type="term" value="C:cytosolic large ribosomal subunit"/>
    <property type="evidence" value="ECO:0007669"/>
    <property type="project" value="TreeGrafter"/>
</dbReference>
<dbReference type="GO" id="GO:0008097">
    <property type="term" value="F:5S rRNA binding"/>
    <property type="evidence" value="ECO:0007669"/>
    <property type="project" value="InterPro"/>
</dbReference>
<dbReference type="GO" id="GO:0003735">
    <property type="term" value="F:structural constituent of ribosome"/>
    <property type="evidence" value="ECO:0007669"/>
    <property type="project" value="InterPro"/>
</dbReference>
<dbReference type="GO" id="GO:0006412">
    <property type="term" value="P:translation"/>
    <property type="evidence" value="ECO:0007669"/>
    <property type="project" value="UniProtKB-UniRule"/>
</dbReference>
<dbReference type="CDD" id="cd00495">
    <property type="entry name" value="Ribosomal_L25_TL5_CTC"/>
    <property type="match status" value="1"/>
</dbReference>
<dbReference type="Gene3D" id="2.170.120.20">
    <property type="entry name" value="Ribosomal protein L25, beta domain"/>
    <property type="match status" value="1"/>
</dbReference>
<dbReference type="Gene3D" id="2.40.240.10">
    <property type="entry name" value="Ribosomal Protein L25, Chain P"/>
    <property type="match status" value="1"/>
</dbReference>
<dbReference type="HAMAP" id="MF_01334">
    <property type="entry name" value="Ribosomal_bL25_CTC"/>
    <property type="match status" value="1"/>
</dbReference>
<dbReference type="InterPro" id="IPR020056">
    <property type="entry name" value="Rbsml_bL25/Gln-tRNA_synth_N"/>
</dbReference>
<dbReference type="InterPro" id="IPR011035">
    <property type="entry name" value="Ribosomal_bL25/Gln-tRNA_synth"/>
</dbReference>
<dbReference type="InterPro" id="IPR020057">
    <property type="entry name" value="Ribosomal_bL25_b-dom"/>
</dbReference>
<dbReference type="InterPro" id="IPR037121">
    <property type="entry name" value="Ribosomal_bL25_C"/>
</dbReference>
<dbReference type="InterPro" id="IPR001021">
    <property type="entry name" value="Ribosomal_bL25_long"/>
</dbReference>
<dbReference type="InterPro" id="IPR029751">
    <property type="entry name" value="Ribosomal_L25_dom"/>
</dbReference>
<dbReference type="InterPro" id="IPR020930">
    <property type="entry name" value="Ribosomal_uL5_bac-type"/>
</dbReference>
<dbReference type="NCBIfam" id="TIGR00731">
    <property type="entry name" value="bL25_bact_ctc"/>
    <property type="match status" value="1"/>
</dbReference>
<dbReference type="NCBIfam" id="NF004131">
    <property type="entry name" value="PRK05618.2-1"/>
    <property type="match status" value="1"/>
</dbReference>
<dbReference type="PANTHER" id="PTHR33284">
    <property type="entry name" value="RIBOSOMAL PROTEIN L25/GLN-TRNA SYNTHETASE, ANTI-CODON-BINDING DOMAIN-CONTAINING PROTEIN"/>
    <property type="match status" value="1"/>
</dbReference>
<dbReference type="PANTHER" id="PTHR33284:SF1">
    <property type="entry name" value="RIBOSOMAL PROTEIN L25_GLN-TRNA SYNTHETASE, ANTI-CODON-BINDING DOMAIN-CONTAINING PROTEIN"/>
    <property type="match status" value="1"/>
</dbReference>
<dbReference type="Pfam" id="PF01386">
    <property type="entry name" value="Ribosomal_L25p"/>
    <property type="match status" value="1"/>
</dbReference>
<dbReference type="Pfam" id="PF14693">
    <property type="entry name" value="Ribosomal_TL5_C"/>
    <property type="match status" value="1"/>
</dbReference>
<dbReference type="SUPFAM" id="SSF50715">
    <property type="entry name" value="Ribosomal protein L25-like"/>
    <property type="match status" value="1"/>
</dbReference>
<reference key="1">
    <citation type="journal article" date="2003" name="Appl. Microbiol. Biotechnol.">
        <title>The Corynebacterium glutamicum genome: features and impacts on biotechnological processes.</title>
        <authorList>
            <person name="Ikeda M."/>
            <person name="Nakagawa S."/>
        </authorList>
    </citation>
    <scope>NUCLEOTIDE SEQUENCE [LARGE SCALE GENOMIC DNA]</scope>
    <source>
        <strain>ATCC 13032 / DSM 20300 / JCM 1318 / BCRC 11384 / CCUG 27702 / LMG 3730 / NBRC 12168 / NCIMB 10025 / NRRL B-2784 / 534</strain>
    </source>
</reference>
<reference key="2">
    <citation type="journal article" date="2003" name="J. Biotechnol.">
        <title>The complete Corynebacterium glutamicum ATCC 13032 genome sequence and its impact on the production of L-aspartate-derived amino acids and vitamins.</title>
        <authorList>
            <person name="Kalinowski J."/>
            <person name="Bathe B."/>
            <person name="Bartels D."/>
            <person name="Bischoff N."/>
            <person name="Bott M."/>
            <person name="Burkovski A."/>
            <person name="Dusch N."/>
            <person name="Eggeling L."/>
            <person name="Eikmanns B.J."/>
            <person name="Gaigalat L."/>
            <person name="Goesmann A."/>
            <person name="Hartmann M."/>
            <person name="Huthmacher K."/>
            <person name="Kraemer R."/>
            <person name="Linke B."/>
            <person name="McHardy A.C."/>
            <person name="Meyer F."/>
            <person name="Moeckel B."/>
            <person name="Pfefferle W."/>
            <person name="Puehler A."/>
            <person name="Rey D.A."/>
            <person name="Rueckert C."/>
            <person name="Rupp O."/>
            <person name="Sahm H."/>
            <person name="Wendisch V.F."/>
            <person name="Wiegraebe I."/>
            <person name="Tauch A."/>
        </authorList>
    </citation>
    <scope>NUCLEOTIDE SEQUENCE [LARGE SCALE GENOMIC DNA]</scope>
    <source>
        <strain>ATCC 13032 / DSM 20300 / JCM 1318 / BCRC 11384 / CCUG 27702 / LMG 3730 / NBRC 12168 / NCIMB 10025 / NRRL B-2784 / 534</strain>
    </source>
</reference>
<evidence type="ECO:0000255" key="1">
    <source>
        <dbReference type="HAMAP-Rule" id="MF_01334"/>
    </source>
</evidence>
<evidence type="ECO:0000305" key="2"/>
<sequence>MAKYQTIEAAVRSEFGKGSARRARVAGQIPAVVYGADVESNLHVTIDHRTFAALVRQEGVNAVLELDIEGQKQLTMIKHIDQNVLTFHIDHLDLLAIKRGEKVEVDVPVIVEGEPAPGTMWVQDADTIKVEADVLSIPEEFTVSIEGLELGAQITAADIKLEGDTTLVEDPETLIVNIVLPAVEEEDTEEDEAAEEAATE</sequence>
<proteinExistence type="inferred from homology"/>
<gene>
    <name evidence="1" type="primary">rplY</name>
    <name evidence="1" type="synonym">ctc</name>
    <name type="ordered locus">Cgl0939</name>
    <name type="ordered locus">cg1072</name>
</gene>
<organism>
    <name type="scientific">Corynebacterium glutamicum (strain ATCC 13032 / DSM 20300 / JCM 1318 / BCRC 11384 / CCUG 27702 / LMG 3730 / NBRC 12168 / NCIMB 10025 / NRRL B-2784 / 534)</name>
    <dbReference type="NCBI Taxonomy" id="196627"/>
    <lineage>
        <taxon>Bacteria</taxon>
        <taxon>Bacillati</taxon>
        <taxon>Actinomycetota</taxon>
        <taxon>Actinomycetes</taxon>
        <taxon>Mycobacteriales</taxon>
        <taxon>Corynebacteriaceae</taxon>
        <taxon>Corynebacterium</taxon>
    </lineage>
</organism>
<name>RL25_CORGL</name>
<protein>
    <recommendedName>
        <fullName evidence="1">Large ribosomal subunit protein bL25</fullName>
    </recommendedName>
    <alternativeName>
        <fullName evidence="2">50S ribosomal protein L25</fullName>
    </alternativeName>
    <alternativeName>
        <fullName evidence="1">General stress protein CTC</fullName>
    </alternativeName>
</protein>
<keyword id="KW-1185">Reference proteome</keyword>
<keyword id="KW-0687">Ribonucleoprotein</keyword>
<keyword id="KW-0689">Ribosomal protein</keyword>
<keyword id="KW-0694">RNA-binding</keyword>
<keyword id="KW-0699">rRNA-binding</keyword>